<organism>
    <name type="scientific">Escherichia coli O8 (strain IAI1)</name>
    <dbReference type="NCBI Taxonomy" id="585034"/>
    <lineage>
        <taxon>Bacteria</taxon>
        <taxon>Pseudomonadati</taxon>
        <taxon>Pseudomonadota</taxon>
        <taxon>Gammaproteobacteria</taxon>
        <taxon>Enterobacterales</taxon>
        <taxon>Enterobacteriaceae</taxon>
        <taxon>Escherichia</taxon>
    </lineage>
</organism>
<protein>
    <recommendedName>
        <fullName evidence="1">D-ribose pyranase</fullName>
        <ecNumber evidence="1">5.4.99.62</ecNumber>
    </recommendedName>
</protein>
<reference key="1">
    <citation type="journal article" date="2009" name="PLoS Genet.">
        <title>Organised genome dynamics in the Escherichia coli species results in highly diverse adaptive paths.</title>
        <authorList>
            <person name="Touchon M."/>
            <person name="Hoede C."/>
            <person name="Tenaillon O."/>
            <person name="Barbe V."/>
            <person name="Baeriswyl S."/>
            <person name="Bidet P."/>
            <person name="Bingen E."/>
            <person name="Bonacorsi S."/>
            <person name="Bouchier C."/>
            <person name="Bouvet O."/>
            <person name="Calteau A."/>
            <person name="Chiapello H."/>
            <person name="Clermont O."/>
            <person name="Cruveiller S."/>
            <person name="Danchin A."/>
            <person name="Diard M."/>
            <person name="Dossat C."/>
            <person name="Karoui M.E."/>
            <person name="Frapy E."/>
            <person name="Garry L."/>
            <person name="Ghigo J.M."/>
            <person name="Gilles A.M."/>
            <person name="Johnson J."/>
            <person name="Le Bouguenec C."/>
            <person name="Lescat M."/>
            <person name="Mangenot S."/>
            <person name="Martinez-Jehanne V."/>
            <person name="Matic I."/>
            <person name="Nassif X."/>
            <person name="Oztas S."/>
            <person name="Petit M.A."/>
            <person name="Pichon C."/>
            <person name="Rouy Z."/>
            <person name="Ruf C.S."/>
            <person name="Schneider D."/>
            <person name="Tourret J."/>
            <person name="Vacherie B."/>
            <person name="Vallenet D."/>
            <person name="Medigue C."/>
            <person name="Rocha E.P.C."/>
            <person name="Denamur E."/>
        </authorList>
    </citation>
    <scope>NUCLEOTIDE SEQUENCE [LARGE SCALE GENOMIC DNA]</scope>
    <source>
        <strain>IAI1</strain>
    </source>
</reference>
<evidence type="ECO:0000255" key="1">
    <source>
        <dbReference type="HAMAP-Rule" id="MF_01661"/>
    </source>
</evidence>
<proteinExistence type="inferred from homology"/>
<gene>
    <name evidence="1" type="primary">rbsD</name>
    <name type="ordered locus">ECIAI1_3932</name>
</gene>
<dbReference type="EC" id="5.4.99.62" evidence="1"/>
<dbReference type="EMBL" id="CU928160">
    <property type="protein sequence ID" value="CAR00726.1"/>
    <property type="molecule type" value="Genomic_DNA"/>
</dbReference>
<dbReference type="RefSeq" id="WP_001297694.1">
    <property type="nucleotide sequence ID" value="NC_011741.1"/>
</dbReference>
<dbReference type="SMR" id="B7M5A4"/>
<dbReference type="GeneID" id="75205466"/>
<dbReference type="KEGG" id="ecr:ECIAI1_3932"/>
<dbReference type="HOGENOM" id="CLU_135498_0_0_6"/>
<dbReference type="UniPathway" id="UPA00916">
    <property type="reaction ID" value="UER00888"/>
</dbReference>
<dbReference type="GO" id="GO:0005829">
    <property type="term" value="C:cytosol"/>
    <property type="evidence" value="ECO:0007669"/>
    <property type="project" value="TreeGrafter"/>
</dbReference>
<dbReference type="GO" id="GO:0062193">
    <property type="term" value="F:D-ribose pyranase activity"/>
    <property type="evidence" value="ECO:0007669"/>
    <property type="project" value="UniProtKB-EC"/>
</dbReference>
<dbReference type="GO" id="GO:0016872">
    <property type="term" value="F:intramolecular lyase activity"/>
    <property type="evidence" value="ECO:0007669"/>
    <property type="project" value="UniProtKB-UniRule"/>
</dbReference>
<dbReference type="GO" id="GO:0048029">
    <property type="term" value="F:monosaccharide binding"/>
    <property type="evidence" value="ECO:0007669"/>
    <property type="project" value="InterPro"/>
</dbReference>
<dbReference type="GO" id="GO:0019303">
    <property type="term" value="P:D-ribose catabolic process"/>
    <property type="evidence" value="ECO:0007669"/>
    <property type="project" value="UniProtKB-UniRule"/>
</dbReference>
<dbReference type="FunFam" id="3.40.1650.10:FF:000002">
    <property type="entry name" value="D-ribose pyranase"/>
    <property type="match status" value="1"/>
</dbReference>
<dbReference type="Gene3D" id="3.40.1650.10">
    <property type="entry name" value="RbsD-like domain"/>
    <property type="match status" value="1"/>
</dbReference>
<dbReference type="HAMAP" id="MF_01661">
    <property type="entry name" value="D_rib_pyranase"/>
    <property type="match status" value="1"/>
</dbReference>
<dbReference type="InterPro" id="IPR023064">
    <property type="entry name" value="D-ribose_pyranase"/>
</dbReference>
<dbReference type="InterPro" id="IPR023750">
    <property type="entry name" value="RbsD-like_sf"/>
</dbReference>
<dbReference type="InterPro" id="IPR007721">
    <property type="entry name" value="RbsD_FucU"/>
</dbReference>
<dbReference type="NCBIfam" id="NF008761">
    <property type="entry name" value="PRK11797.1"/>
    <property type="match status" value="1"/>
</dbReference>
<dbReference type="PANTHER" id="PTHR37831">
    <property type="entry name" value="D-RIBOSE PYRANASE"/>
    <property type="match status" value="1"/>
</dbReference>
<dbReference type="PANTHER" id="PTHR37831:SF1">
    <property type="entry name" value="D-RIBOSE PYRANASE"/>
    <property type="match status" value="1"/>
</dbReference>
<dbReference type="Pfam" id="PF05025">
    <property type="entry name" value="RbsD_FucU"/>
    <property type="match status" value="1"/>
</dbReference>
<dbReference type="SUPFAM" id="SSF102546">
    <property type="entry name" value="RbsD-like"/>
    <property type="match status" value="1"/>
</dbReference>
<keyword id="KW-0119">Carbohydrate metabolism</keyword>
<keyword id="KW-0963">Cytoplasm</keyword>
<keyword id="KW-0413">Isomerase</keyword>
<accession>B7M5A4</accession>
<name>RBSD_ECO8A</name>
<feature type="chain" id="PRO_1000187146" description="D-ribose pyranase">
    <location>
        <begin position="1"/>
        <end position="139"/>
    </location>
</feature>
<feature type="active site" description="Proton donor" evidence="1">
    <location>
        <position position="20"/>
    </location>
</feature>
<feature type="binding site" evidence="1">
    <location>
        <position position="28"/>
    </location>
    <ligand>
        <name>substrate</name>
    </ligand>
</feature>
<feature type="binding site" evidence="1">
    <location>
        <position position="106"/>
    </location>
    <ligand>
        <name>substrate</name>
    </ligand>
</feature>
<feature type="binding site" evidence="1">
    <location>
        <begin position="128"/>
        <end position="130"/>
    </location>
    <ligand>
        <name>substrate</name>
    </ligand>
</feature>
<sequence length="139" mass="15316">MKKGTVLNSDISSMISRLGHTDTLVVCDAGLPIPKSTTRIDMALTQGVPSFMQVLGVVTNEMQVEAAIIAEEIKQHNPQLHETLLTHLEQLQKHQGNTIEIRYTTHEQFKQQTAESQAVIRSGECSPYANIILCAGVTF</sequence>
<comment type="function">
    <text evidence="1">Catalyzes the interconversion of beta-pyran and beta-furan forms of D-ribose.</text>
</comment>
<comment type="catalytic activity">
    <reaction evidence="1">
        <text>beta-D-ribopyranose = beta-D-ribofuranose</text>
        <dbReference type="Rhea" id="RHEA:25432"/>
        <dbReference type="ChEBI" id="CHEBI:27476"/>
        <dbReference type="ChEBI" id="CHEBI:47002"/>
        <dbReference type="EC" id="5.4.99.62"/>
    </reaction>
</comment>
<comment type="pathway">
    <text evidence="1">Carbohydrate metabolism; D-ribose degradation; D-ribose 5-phosphate from beta-D-ribopyranose: step 1/2.</text>
</comment>
<comment type="subunit">
    <text evidence="1">Homodecamer.</text>
</comment>
<comment type="subcellular location">
    <subcellularLocation>
        <location evidence="1">Cytoplasm</location>
    </subcellularLocation>
</comment>
<comment type="similarity">
    <text evidence="1">Belongs to the RbsD / FucU family. RbsD subfamily.</text>
</comment>